<evidence type="ECO:0000303" key="1">
    <source>
    </source>
</evidence>
<evidence type="ECO:0000305" key="2"/>
<proteinExistence type="evidence at transcript level"/>
<name>RS174_ARATH</name>
<organism>
    <name type="scientific">Arabidopsis thaliana</name>
    <name type="common">Mouse-ear cress</name>
    <dbReference type="NCBI Taxonomy" id="3702"/>
    <lineage>
        <taxon>Eukaryota</taxon>
        <taxon>Viridiplantae</taxon>
        <taxon>Streptophyta</taxon>
        <taxon>Embryophyta</taxon>
        <taxon>Tracheophyta</taxon>
        <taxon>Spermatophyta</taxon>
        <taxon>Magnoliopsida</taxon>
        <taxon>eudicotyledons</taxon>
        <taxon>Gunneridae</taxon>
        <taxon>Pentapetalae</taxon>
        <taxon>rosids</taxon>
        <taxon>malvids</taxon>
        <taxon>Brassicales</taxon>
        <taxon>Brassicaceae</taxon>
        <taxon>Camelineae</taxon>
        <taxon>Arabidopsis</taxon>
    </lineage>
</organism>
<sequence length="141" mass="16019">MGRVRTKTVKKSSRQVIEKYYSRMTLDFHTNKKILEEVAIIPSKRLRNKIAGFSTHLMKRIQKGPVRGISLKLQEEERERRMDFVPDESAIKTDEIKVDKETLEMLASLGMSDTPGISAVEPQQAMAPIAAFGGGRAPRRY</sequence>
<keyword id="KW-1185">Reference proteome</keyword>
<keyword id="KW-0687">Ribonucleoprotein</keyword>
<keyword id="KW-0689">Ribosomal protein</keyword>
<dbReference type="EMBL" id="AL162972">
    <property type="protein sequence ID" value="CAB86022.1"/>
    <property type="molecule type" value="Genomic_DNA"/>
</dbReference>
<dbReference type="EMBL" id="AB008271">
    <property type="protein sequence ID" value="BAB08984.1"/>
    <property type="molecule type" value="Genomic_DNA"/>
</dbReference>
<dbReference type="EMBL" id="CP002688">
    <property type="protein sequence ID" value="AED90785.1"/>
    <property type="molecule type" value="Genomic_DNA"/>
</dbReference>
<dbReference type="EMBL" id="CP002688">
    <property type="protein sequence ID" value="AED90786.1"/>
    <property type="molecule type" value="Genomic_DNA"/>
</dbReference>
<dbReference type="EMBL" id="CP002688">
    <property type="protein sequence ID" value="AED90787.1"/>
    <property type="molecule type" value="Genomic_DNA"/>
</dbReference>
<dbReference type="EMBL" id="CP002688">
    <property type="protein sequence ID" value="AED90788.1"/>
    <property type="molecule type" value="Genomic_DNA"/>
</dbReference>
<dbReference type="EMBL" id="AF361843">
    <property type="protein sequence ID" value="AAK32855.1"/>
    <property type="molecule type" value="mRNA"/>
</dbReference>
<dbReference type="EMBL" id="BT000851">
    <property type="protein sequence ID" value="AAN38688.1"/>
    <property type="molecule type" value="mRNA"/>
</dbReference>
<dbReference type="EMBL" id="AY087862">
    <property type="protein sequence ID" value="AAM65414.1"/>
    <property type="molecule type" value="mRNA"/>
</dbReference>
<dbReference type="PIR" id="T48476">
    <property type="entry name" value="T48476"/>
</dbReference>
<dbReference type="RefSeq" id="NP_001031834.1">
    <property type="nucleotide sequence ID" value="NM_001036757.1"/>
</dbReference>
<dbReference type="RefSeq" id="NP_001031835.1">
    <property type="nucleotide sequence ID" value="NM_001036758.1"/>
</dbReference>
<dbReference type="RefSeq" id="NP_196100.1">
    <property type="nucleotide sequence ID" value="NM_120562.3"/>
</dbReference>
<dbReference type="RefSeq" id="NP_850765.1">
    <property type="nucleotide sequence ID" value="NM_180434.3"/>
</dbReference>
<dbReference type="SMR" id="Q9LZ17"/>
<dbReference type="BioGRID" id="15638">
    <property type="interactions" value="45"/>
</dbReference>
<dbReference type="FunCoup" id="Q9LZ17">
    <property type="interactions" value="3138"/>
</dbReference>
<dbReference type="STRING" id="3702.Q9LZ17"/>
<dbReference type="PaxDb" id="3702-AT5G04800.4"/>
<dbReference type="ProteomicsDB" id="226866"/>
<dbReference type="EnsemblPlants" id="AT5G04800.1">
    <property type="protein sequence ID" value="AT5G04800.1"/>
    <property type="gene ID" value="AT5G04800"/>
</dbReference>
<dbReference type="EnsemblPlants" id="AT5G04800.2">
    <property type="protein sequence ID" value="AT5G04800.2"/>
    <property type="gene ID" value="AT5G04800"/>
</dbReference>
<dbReference type="EnsemblPlants" id="AT5G04800.3">
    <property type="protein sequence ID" value="AT5G04800.3"/>
    <property type="gene ID" value="AT5G04800"/>
</dbReference>
<dbReference type="EnsemblPlants" id="AT5G04800.4">
    <property type="protein sequence ID" value="AT5G04800.4"/>
    <property type="gene ID" value="AT5G04800"/>
</dbReference>
<dbReference type="GeneID" id="830359"/>
<dbReference type="Gramene" id="AT5G04800.1">
    <property type="protein sequence ID" value="AT5G04800.1"/>
    <property type="gene ID" value="AT5G04800"/>
</dbReference>
<dbReference type="Gramene" id="AT5G04800.2">
    <property type="protein sequence ID" value="AT5G04800.2"/>
    <property type="gene ID" value="AT5G04800"/>
</dbReference>
<dbReference type="Gramene" id="AT5G04800.3">
    <property type="protein sequence ID" value="AT5G04800.3"/>
    <property type="gene ID" value="AT5G04800"/>
</dbReference>
<dbReference type="Gramene" id="AT5G04800.4">
    <property type="protein sequence ID" value="AT5G04800.4"/>
    <property type="gene ID" value="AT5G04800"/>
</dbReference>
<dbReference type="KEGG" id="ath:AT5G04800"/>
<dbReference type="Araport" id="AT5G04800"/>
<dbReference type="TAIR" id="AT5G04800"/>
<dbReference type="eggNOG" id="KOG0187">
    <property type="taxonomic scope" value="Eukaryota"/>
</dbReference>
<dbReference type="HOGENOM" id="CLU_112958_2_0_1"/>
<dbReference type="InParanoid" id="Q9LZ17"/>
<dbReference type="OMA" id="FTTHLMA"/>
<dbReference type="OrthoDB" id="1727351at2759"/>
<dbReference type="PhylomeDB" id="Q9LZ17"/>
<dbReference type="PRO" id="PR:Q9LZ17"/>
<dbReference type="Proteomes" id="UP000006548">
    <property type="component" value="Chromosome 5"/>
</dbReference>
<dbReference type="ExpressionAtlas" id="Q9LZ17">
    <property type="expression patterns" value="baseline and differential"/>
</dbReference>
<dbReference type="GO" id="GO:0005886">
    <property type="term" value="C:plasma membrane"/>
    <property type="evidence" value="ECO:0007005"/>
    <property type="project" value="TAIR"/>
</dbReference>
<dbReference type="GO" id="GO:1990904">
    <property type="term" value="C:ribonucleoprotein complex"/>
    <property type="evidence" value="ECO:0007669"/>
    <property type="project" value="UniProtKB-KW"/>
</dbReference>
<dbReference type="GO" id="GO:0005840">
    <property type="term" value="C:ribosome"/>
    <property type="evidence" value="ECO:0007669"/>
    <property type="project" value="UniProtKB-KW"/>
</dbReference>
<dbReference type="GO" id="GO:0003729">
    <property type="term" value="F:mRNA binding"/>
    <property type="evidence" value="ECO:0000314"/>
    <property type="project" value="TAIR"/>
</dbReference>
<dbReference type="GO" id="GO:0003735">
    <property type="term" value="F:structural constituent of ribosome"/>
    <property type="evidence" value="ECO:0007669"/>
    <property type="project" value="InterPro"/>
</dbReference>
<dbReference type="GO" id="GO:0006412">
    <property type="term" value="P:translation"/>
    <property type="evidence" value="ECO:0007669"/>
    <property type="project" value="InterPro"/>
</dbReference>
<dbReference type="FunFam" id="1.10.60.20:FF:000001">
    <property type="entry name" value="40S ribosomal protein S17"/>
    <property type="match status" value="1"/>
</dbReference>
<dbReference type="Gene3D" id="1.10.60.20">
    <property type="entry name" value="Ribosomal protein S17e-like"/>
    <property type="match status" value="1"/>
</dbReference>
<dbReference type="HAMAP" id="MF_00511">
    <property type="entry name" value="Ribosomal_eS17"/>
    <property type="match status" value="1"/>
</dbReference>
<dbReference type="InterPro" id="IPR001210">
    <property type="entry name" value="Ribosomal_eS17"/>
</dbReference>
<dbReference type="InterPro" id="IPR018273">
    <property type="entry name" value="Ribosomal_eS17_CS"/>
</dbReference>
<dbReference type="InterPro" id="IPR036401">
    <property type="entry name" value="Ribosomal_eS17_sf"/>
</dbReference>
<dbReference type="PANTHER" id="PTHR10732">
    <property type="entry name" value="40S RIBOSOMAL PROTEIN S17"/>
    <property type="match status" value="1"/>
</dbReference>
<dbReference type="PANTHER" id="PTHR10732:SF26">
    <property type="entry name" value="SMALL RIBOSOMAL SUBUNIT PROTEIN ES17W"/>
    <property type="match status" value="1"/>
</dbReference>
<dbReference type="Pfam" id="PF00833">
    <property type="entry name" value="Ribosomal_S17e"/>
    <property type="match status" value="1"/>
</dbReference>
<dbReference type="SUPFAM" id="SSF116820">
    <property type="entry name" value="Rps17e-like"/>
    <property type="match status" value="1"/>
</dbReference>
<dbReference type="PROSITE" id="PS00712">
    <property type="entry name" value="RIBOSOMAL_S17E"/>
    <property type="match status" value="1"/>
</dbReference>
<reference key="1">
    <citation type="journal article" date="2000" name="Nature">
        <title>Sequence and analysis of chromosome 5 of the plant Arabidopsis thaliana.</title>
        <authorList>
            <person name="Tabata S."/>
            <person name="Kaneko T."/>
            <person name="Nakamura Y."/>
            <person name="Kotani H."/>
            <person name="Kato T."/>
            <person name="Asamizu E."/>
            <person name="Miyajima N."/>
            <person name="Sasamoto S."/>
            <person name="Kimura T."/>
            <person name="Hosouchi T."/>
            <person name="Kawashima K."/>
            <person name="Kohara M."/>
            <person name="Matsumoto M."/>
            <person name="Matsuno A."/>
            <person name="Muraki A."/>
            <person name="Nakayama S."/>
            <person name="Nakazaki N."/>
            <person name="Naruo K."/>
            <person name="Okumura S."/>
            <person name="Shinpo S."/>
            <person name="Takeuchi C."/>
            <person name="Wada T."/>
            <person name="Watanabe A."/>
            <person name="Yamada M."/>
            <person name="Yasuda M."/>
            <person name="Sato S."/>
            <person name="de la Bastide M."/>
            <person name="Huang E."/>
            <person name="Spiegel L."/>
            <person name="Gnoj L."/>
            <person name="O'Shaughnessy A."/>
            <person name="Preston R."/>
            <person name="Habermann K."/>
            <person name="Murray J."/>
            <person name="Johnson D."/>
            <person name="Rohlfing T."/>
            <person name="Nelson J."/>
            <person name="Stoneking T."/>
            <person name="Pepin K."/>
            <person name="Spieth J."/>
            <person name="Sekhon M."/>
            <person name="Armstrong J."/>
            <person name="Becker M."/>
            <person name="Belter E."/>
            <person name="Cordum H."/>
            <person name="Cordes M."/>
            <person name="Courtney L."/>
            <person name="Courtney W."/>
            <person name="Dante M."/>
            <person name="Du H."/>
            <person name="Edwards J."/>
            <person name="Fryman J."/>
            <person name="Haakensen B."/>
            <person name="Lamar E."/>
            <person name="Latreille P."/>
            <person name="Leonard S."/>
            <person name="Meyer R."/>
            <person name="Mulvaney E."/>
            <person name="Ozersky P."/>
            <person name="Riley A."/>
            <person name="Strowmatt C."/>
            <person name="Wagner-McPherson C."/>
            <person name="Wollam A."/>
            <person name="Yoakum M."/>
            <person name="Bell M."/>
            <person name="Dedhia N."/>
            <person name="Parnell L."/>
            <person name="Shah R."/>
            <person name="Rodriguez M."/>
            <person name="Hoon See L."/>
            <person name="Vil D."/>
            <person name="Baker J."/>
            <person name="Kirchoff K."/>
            <person name="Toth K."/>
            <person name="King L."/>
            <person name="Bahret A."/>
            <person name="Miller B."/>
            <person name="Marra M.A."/>
            <person name="Martienssen R."/>
            <person name="McCombie W.R."/>
            <person name="Wilson R.K."/>
            <person name="Murphy G."/>
            <person name="Bancroft I."/>
            <person name="Volckaert G."/>
            <person name="Wambutt R."/>
            <person name="Duesterhoeft A."/>
            <person name="Stiekema W."/>
            <person name="Pohl T."/>
            <person name="Entian K.-D."/>
            <person name="Terryn N."/>
            <person name="Hartley N."/>
            <person name="Bent E."/>
            <person name="Johnson S."/>
            <person name="Langham S.-A."/>
            <person name="McCullagh B."/>
            <person name="Robben J."/>
            <person name="Grymonprez B."/>
            <person name="Zimmermann W."/>
            <person name="Ramsperger U."/>
            <person name="Wedler H."/>
            <person name="Balke K."/>
            <person name="Wedler E."/>
            <person name="Peters S."/>
            <person name="van Staveren M."/>
            <person name="Dirkse W."/>
            <person name="Mooijman P."/>
            <person name="Klein Lankhorst R."/>
            <person name="Weitzenegger T."/>
            <person name="Bothe G."/>
            <person name="Rose M."/>
            <person name="Hauf J."/>
            <person name="Berneiser S."/>
            <person name="Hempel S."/>
            <person name="Feldpausch M."/>
            <person name="Lamberth S."/>
            <person name="Villarroel R."/>
            <person name="Gielen J."/>
            <person name="Ardiles W."/>
            <person name="Bents O."/>
            <person name="Lemcke K."/>
            <person name="Kolesov G."/>
            <person name="Mayer K.F.X."/>
            <person name="Rudd S."/>
            <person name="Schoof H."/>
            <person name="Schueller C."/>
            <person name="Zaccaria P."/>
            <person name="Mewes H.-W."/>
            <person name="Bevan M."/>
            <person name="Fransz P.F."/>
        </authorList>
    </citation>
    <scope>NUCLEOTIDE SEQUENCE [LARGE SCALE GENOMIC DNA]</scope>
    <source>
        <strain>cv. Columbia</strain>
    </source>
</reference>
<reference key="2">
    <citation type="journal article" date="1997" name="DNA Res.">
        <title>Structural analysis of Arabidopsis thaliana chromosome 5. III. Sequence features of the regions of 1,191,918 bp covered by seventeen physically assigned P1 clones.</title>
        <authorList>
            <person name="Nakamura Y."/>
            <person name="Sato S."/>
            <person name="Kaneko T."/>
            <person name="Kotani H."/>
            <person name="Asamizu E."/>
            <person name="Miyajima N."/>
            <person name="Tabata S."/>
        </authorList>
    </citation>
    <scope>NUCLEOTIDE SEQUENCE [LARGE SCALE GENOMIC DNA]</scope>
    <source>
        <strain>cv. Columbia</strain>
    </source>
</reference>
<reference key="3">
    <citation type="journal article" date="2017" name="Plant J.">
        <title>Araport11: a complete reannotation of the Arabidopsis thaliana reference genome.</title>
        <authorList>
            <person name="Cheng C.Y."/>
            <person name="Krishnakumar V."/>
            <person name="Chan A.P."/>
            <person name="Thibaud-Nissen F."/>
            <person name="Schobel S."/>
            <person name="Town C.D."/>
        </authorList>
    </citation>
    <scope>GENOME REANNOTATION</scope>
    <source>
        <strain>cv. Columbia</strain>
    </source>
</reference>
<reference key="4">
    <citation type="journal article" date="2003" name="Science">
        <title>Empirical analysis of transcriptional activity in the Arabidopsis genome.</title>
        <authorList>
            <person name="Yamada K."/>
            <person name="Lim J."/>
            <person name="Dale J.M."/>
            <person name="Chen H."/>
            <person name="Shinn P."/>
            <person name="Palm C.J."/>
            <person name="Southwick A.M."/>
            <person name="Wu H.C."/>
            <person name="Kim C.J."/>
            <person name="Nguyen M."/>
            <person name="Pham P.K."/>
            <person name="Cheuk R.F."/>
            <person name="Karlin-Newmann G."/>
            <person name="Liu S.X."/>
            <person name="Lam B."/>
            <person name="Sakano H."/>
            <person name="Wu T."/>
            <person name="Yu G."/>
            <person name="Miranda M."/>
            <person name="Quach H.L."/>
            <person name="Tripp M."/>
            <person name="Chang C.H."/>
            <person name="Lee J.M."/>
            <person name="Toriumi M.J."/>
            <person name="Chan M.M."/>
            <person name="Tang C.C."/>
            <person name="Onodera C.S."/>
            <person name="Deng J.M."/>
            <person name="Akiyama K."/>
            <person name="Ansari Y."/>
            <person name="Arakawa T."/>
            <person name="Banh J."/>
            <person name="Banno F."/>
            <person name="Bowser L."/>
            <person name="Brooks S.Y."/>
            <person name="Carninci P."/>
            <person name="Chao Q."/>
            <person name="Choy N."/>
            <person name="Enju A."/>
            <person name="Goldsmith A.D."/>
            <person name="Gurjal M."/>
            <person name="Hansen N.F."/>
            <person name="Hayashizaki Y."/>
            <person name="Johnson-Hopson C."/>
            <person name="Hsuan V.W."/>
            <person name="Iida K."/>
            <person name="Karnes M."/>
            <person name="Khan S."/>
            <person name="Koesema E."/>
            <person name="Ishida J."/>
            <person name="Jiang P.X."/>
            <person name="Jones T."/>
            <person name="Kawai J."/>
            <person name="Kamiya A."/>
            <person name="Meyers C."/>
            <person name="Nakajima M."/>
            <person name="Narusaka M."/>
            <person name="Seki M."/>
            <person name="Sakurai T."/>
            <person name="Satou M."/>
            <person name="Tamse R."/>
            <person name="Vaysberg M."/>
            <person name="Wallender E.K."/>
            <person name="Wong C."/>
            <person name="Yamamura Y."/>
            <person name="Yuan S."/>
            <person name="Shinozaki K."/>
            <person name="Davis R.W."/>
            <person name="Theologis A."/>
            <person name="Ecker J.R."/>
        </authorList>
    </citation>
    <scope>NUCLEOTIDE SEQUENCE [LARGE SCALE MRNA]</scope>
    <source>
        <strain>cv. Columbia</strain>
    </source>
</reference>
<reference key="5">
    <citation type="submission" date="2002-03" db="EMBL/GenBank/DDBJ databases">
        <title>Full-length cDNA from Arabidopsis thaliana.</title>
        <authorList>
            <person name="Brover V.V."/>
            <person name="Troukhan M.E."/>
            <person name="Alexandrov N.A."/>
            <person name="Lu Y.-P."/>
            <person name="Flavell R.B."/>
            <person name="Feldmann K.A."/>
        </authorList>
    </citation>
    <scope>NUCLEOTIDE SEQUENCE [LARGE SCALE MRNA]</scope>
</reference>
<reference key="6">
    <citation type="journal article" date="2001" name="Plant Physiol.">
        <title>The organization of cytoplasmic ribosomal protein genes in the Arabidopsis genome.</title>
        <authorList>
            <person name="Barakat A."/>
            <person name="Szick-Miranda K."/>
            <person name="Chang I.-F."/>
            <person name="Guyot R."/>
            <person name="Blanc G."/>
            <person name="Cooke R."/>
            <person name="Delseny M."/>
            <person name="Bailey-Serres J."/>
        </authorList>
    </citation>
    <scope>GENE FAMILY ORGANIZATION</scope>
    <scope>NOMENCLATURE</scope>
</reference>
<reference key="7">
    <citation type="journal article" date="2023" name="Plant Cell">
        <title>An updated nomenclature for plant ribosomal protein genes.</title>
        <authorList>
            <person name="Scarpin M.R."/>
            <person name="Busche M."/>
            <person name="Martinez R.E."/>
            <person name="Harper L.C."/>
            <person name="Reiser L."/>
            <person name="Szakonyi D."/>
            <person name="Merchante C."/>
            <person name="Lan T."/>
            <person name="Xiong W."/>
            <person name="Mo B."/>
            <person name="Tang G."/>
            <person name="Chen X."/>
            <person name="Bailey-Serres J."/>
            <person name="Browning K.S."/>
            <person name="Brunkard J.O."/>
        </authorList>
    </citation>
    <scope>NOMENCLATURE</scope>
</reference>
<gene>
    <name type="primary">RPS17D</name>
    <name type="ordered locus">At5g04800</name>
    <name type="ORF">MUK11.12</name>
    <name type="ORF">T1E3_160</name>
</gene>
<comment type="similarity">
    <text evidence="2">Belongs to the eukaryotic ribosomal protein eS17 family.</text>
</comment>
<protein>
    <recommendedName>
        <fullName evidence="1">Small ribosomal subunit protein eS17w</fullName>
    </recommendedName>
    <alternativeName>
        <fullName>40S ribosomal protein S17-4</fullName>
    </alternativeName>
</protein>
<accession>Q9LZ17</accession>
<accession>Q8LAE8</accession>
<feature type="chain" id="PRO_0000141541" description="Small ribosomal subunit protein eS17w">
    <location>
        <begin position="1"/>
        <end position="141"/>
    </location>
</feature>
<feature type="sequence conflict" description="In Ref. 5; AAM65414." evidence="2" ref="5">
    <original>D</original>
    <variation>G</variation>
    <location>
        <position position="87"/>
    </location>
</feature>